<accession>Q71WP3</accession>
<gene>
    <name evidence="1" type="primary">atpB</name>
    <name type="ordered locus">LMOf2365_2508</name>
</gene>
<evidence type="ECO:0000255" key="1">
    <source>
        <dbReference type="HAMAP-Rule" id="MF_01393"/>
    </source>
</evidence>
<feature type="chain" id="PRO_1000145286" description="ATP synthase subunit a">
    <location>
        <begin position="1"/>
        <end position="238"/>
    </location>
</feature>
<feature type="transmembrane region" description="Helical" evidence="1">
    <location>
        <begin position="17"/>
        <end position="37"/>
    </location>
</feature>
<feature type="transmembrane region" description="Helical" evidence="1">
    <location>
        <begin position="80"/>
        <end position="100"/>
    </location>
</feature>
<feature type="transmembrane region" description="Helical" evidence="1">
    <location>
        <begin position="112"/>
        <end position="132"/>
    </location>
</feature>
<feature type="transmembrane region" description="Helical" evidence="1">
    <location>
        <begin position="194"/>
        <end position="214"/>
    </location>
</feature>
<sequence>MEEEFPTISLLGIDFNLSNILMITVTCVIVLLIAIICTRNLQRRPTGKQNFIEWVMDFVRGIINSNMDWKTGGRFHVLGITLLMFIFVANMLGLPFQIAINDEVWWRSPTADPIVTLTLAIMVLGLTHYYGIKMRGFKHYFVGTYFSPMKFLFPLKLVEEFANTLTLGLRLYGNIFAGEVLLTIIATQLAHMNIFVGVLAIIPALLWQGFSIFIGAIQAYIFTMLTMVYMSHKVSDEH</sequence>
<organism>
    <name type="scientific">Listeria monocytogenes serotype 4b (strain F2365)</name>
    <dbReference type="NCBI Taxonomy" id="265669"/>
    <lineage>
        <taxon>Bacteria</taxon>
        <taxon>Bacillati</taxon>
        <taxon>Bacillota</taxon>
        <taxon>Bacilli</taxon>
        <taxon>Bacillales</taxon>
        <taxon>Listeriaceae</taxon>
        <taxon>Listeria</taxon>
    </lineage>
</organism>
<comment type="function">
    <text evidence="1">Key component of the proton channel; it plays a direct role in the translocation of protons across the membrane.</text>
</comment>
<comment type="subunit">
    <text evidence="1">F-type ATPases have 2 components, CF(1) - the catalytic core - and CF(0) - the membrane proton channel. CF(1) has five subunits: alpha(3), beta(3), gamma(1), delta(1), epsilon(1). CF(0) has three main subunits: a(1), b(2) and c(9-12). The alpha and beta chains form an alternating ring which encloses part of the gamma chain. CF(1) is attached to CF(0) by a central stalk formed by the gamma and epsilon chains, while a peripheral stalk is formed by the delta and b chains.</text>
</comment>
<comment type="subcellular location">
    <subcellularLocation>
        <location evidence="1">Cell membrane</location>
        <topology evidence="1">Multi-pass membrane protein</topology>
    </subcellularLocation>
</comment>
<comment type="similarity">
    <text evidence="1">Belongs to the ATPase A chain family.</text>
</comment>
<dbReference type="EMBL" id="AE017262">
    <property type="protein sequence ID" value="AAT05273.1"/>
    <property type="molecule type" value="Genomic_DNA"/>
</dbReference>
<dbReference type="RefSeq" id="WP_003723468.1">
    <property type="nucleotide sequence ID" value="NC_002973.6"/>
</dbReference>
<dbReference type="SMR" id="Q71WP3"/>
<dbReference type="GeneID" id="93235942"/>
<dbReference type="KEGG" id="lmf:LMOf2365_2508"/>
<dbReference type="HOGENOM" id="CLU_041018_2_3_9"/>
<dbReference type="GO" id="GO:0005886">
    <property type="term" value="C:plasma membrane"/>
    <property type="evidence" value="ECO:0007669"/>
    <property type="project" value="UniProtKB-SubCell"/>
</dbReference>
<dbReference type="GO" id="GO:0045259">
    <property type="term" value="C:proton-transporting ATP synthase complex"/>
    <property type="evidence" value="ECO:0007669"/>
    <property type="project" value="UniProtKB-KW"/>
</dbReference>
<dbReference type="GO" id="GO:0046933">
    <property type="term" value="F:proton-transporting ATP synthase activity, rotational mechanism"/>
    <property type="evidence" value="ECO:0007669"/>
    <property type="project" value="UniProtKB-UniRule"/>
</dbReference>
<dbReference type="GO" id="GO:0042777">
    <property type="term" value="P:proton motive force-driven plasma membrane ATP synthesis"/>
    <property type="evidence" value="ECO:0007669"/>
    <property type="project" value="TreeGrafter"/>
</dbReference>
<dbReference type="CDD" id="cd00310">
    <property type="entry name" value="ATP-synt_Fo_a_6"/>
    <property type="match status" value="1"/>
</dbReference>
<dbReference type="FunFam" id="1.20.120.220:FF:000005">
    <property type="entry name" value="ATP synthase subunit a"/>
    <property type="match status" value="1"/>
</dbReference>
<dbReference type="Gene3D" id="1.20.120.220">
    <property type="entry name" value="ATP synthase, F0 complex, subunit A"/>
    <property type="match status" value="1"/>
</dbReference>
<dbReference type="HAMAP" id="MF_01393">
    <property type="entry name" value="ATP_synth_a_bact"/>
    <property type="match status" value="1"/>
</dbReference>
<dbReference type="InterPro" id="IPR045082">
    <property type="entry name" value="ATP_syn_F0_a_bact/chloroplast"/>
</dbReference>
<dbReference type="InterPro" id="IPR000568">
    <property type="entry name" value="ATP_synth_F0_asu"/>
</dbReference>
<dbReference type="InterPro" id="IPR023011">
    <property type="entry name" value="ATP_synth_F0_asu_AS"/>
</dbReference>
<dbReference type="InterPro" id="IPR035908">
    <property type="entry name" value="F0_ATP_A_sf"/>
</dbReference>
<dbReference type="NCBIfam" id="TIGR01131">
    <property type="entry name" value="ATP_synt_6_or_A"/>
    <property type="match status" value="1"/>
</dbReference>
<dbReference type="NCBIfam" id="NF004479">
    <property type="entry name" value="PRK05815.1-4"/>
    <property type="match status" value="1"/>
</dbReference>
<dbReference type="PANTHER" id="PTHR42823">
    <property type="entry name" value="ATP SYNTHASE SUBUNIT A, CHLOROPLASTIC"/>
    <property type="match status" value="1"/>
</dbReference>
<dbReference type="PANTHER" id="PTHR42823:SF3">
    <property type="entry name" value="ATP SYNTHASE SUBUNIT A, CHLOROPLASTIC"/>
    <property type="match status" value="1"/>
</dbReference>
<dbReference type="Pfam" id="PF00119">
    <property type="entry name" value="ATP-synt_A"/>
    <property type="match status" value="1"/>
</dbReference>
<dbReference type="PRINTS" id="PR00123">
    <property type="entry name" value="ATPASEA"/>
</dbReference>
<dbReference type="SUPFAM" id="SSF81336">
    <property type="entry name" value="F1F0 ATP synthase subunit A"/>
    <property type="match status" value="1"/>
</dbReference>
<dbReference type="PROSITE" id="PS00449">
    <property type="entry name" value="ATPASE_A"/>
    <property type="match status" value="1"/>
</dbReference>
<name>ATP6_LISMF</name>
<proteinExistence type="inferred from homology"/>
<reference key="1">
    <citation type="journal article" date="2004" name="Nucleic Acids Res.">
        <title>Whole genome comparisons of serotype 4b and 1/2a strains of the food-borne pathogen Listeria monocytogenes reveal new insights into the core genome components of this species.</title>
        <authorList>
            <person name="Nelson K.E."/>
            <person name="Fouts D.E."/>
            <person name="Mongodin E.F."/>
            <person name="Ravel J."/>
            <person name="DeBoy R.T."/>
            <person name="Kolonay J.F."/>
            <person name="Rasko D.A."/>
            <person name="Angiuoli S.V."/>
            <person name="Gill S.R."/>
            <person name="Paulsen I.T."/>
            <person name="Peterson J.D."/>
            <person name="White O."/>
            <person name="Nelson W.C."/>
            <person name="Nierman W.C."/>
            <person name="Beanan M.J."/>
            <person name="Brinkac L.M."/>
            <person name="Daugherty S.C."/>
            <person name="Dodson R.J."/>
            <person name="Durkin A.S."/>
            <person name="Madupu R."/>
            <person name="Haft D.H."/>
            <person name="Selengut J."/>
            <person name="Van Aken S.E."/>
            <person name="Khouri H.M."/>
            <person name="Fedorova N."/>
            <person name="Forberger H.A."/>
            <person name="Tran B."/>
            <person name="Kathariou S."/>
            <person name="Wonderling L.D."/>
            <person name="Uhlich G.A."/>
            <person name="Bayles D.O."/>
            <person name="Luchansky J.B."/>
            <person name="Fraser C.M."/>
        </authorList>
    </citation>
    <scope>NUCLEOTIDE SEQUENCE [LARGE SCALE GENOMIC DNA]</scope>
    <source>
        <strain>F2365</strain>
    </source>
</reference>
<protein>
    <recommendedName>
        <fullName evidence="1">ATP synthase subunit a</fullName>
    </recommendedName>
    <alternativeName>
        <fullName evidence="1">ATP synthase F0 sector subunit a</fullName>
    </alternativeName>
    <alternativeName>
        <fullName evidence="1">F-ATPase subunit 6</fullName>
    </alternativeName>
</protein>
<keyword id="KW-0066">ATP synthesis</keyword>
<keyword id="KW-1003">Cell membrane</keyword>
<keyword id="KW-0138">CF(0)</keyword>
<keyword id="KW-0375">Hydrogen ion transport</keyword>
<keyword id="KW-0406">Ion transport</keyword>
<keyword id="KW-0472">Membrane</keyword>
<keyword id="KW-0812">Transmembrane</keyword>
<keyword id="KW-1133">Transmembrane helix</keyword>
<keyword id="KW-0813">Transport</keyword>